<gene>
    <name type="ordered locus">MT2944.1</name>
</gene>
<dbReference type="EMBL" id="AE000516">
    <property type="status" value="NOT_ANNOTATED_CDS"/>
    <property type="molecule type" value="Genomic_DNA"/>
</dbReference>
<dbReference type="PIR" id="G70923">
    <property type="entry name" value="G70923"/>
</dbReference>
<dbReference type="SMR" id="P9WL38"/>
<dbReference type="PATRIC" id="fig|83331.31.peg.3181"/>
<dbReference type="Proteomes" id="UP000001020">
    <property type="component" value="Chromosome"/>
</dbReference>
<dbReference type="GO" id="GO:0005886">
    <property type="term" value="C:plasma membrane"/>
    <property type="evidence" value="ECO:0007669"/>
    <property type="project" value="UniProtKB-SubCell"/>
</dbReference>
<dbReference type="InterPro" id="IPR024341">
    <property type="entry name" value="DUF2631"/>
</dbReference>
<dbReference type="Pfam" id="PF10939">
    <property type="entry name" value="DUF2631"/>
    <property type="match status" value="1"/>
</dbReference>
<sequence length="104" mass="11805">MFGQWEFDVSPTGGIAVASTEVEHFAGSQHEVDTAEVPSAAWGWSRIDHRTWHIVGLCIFGFLLAMLRGNHVGHVEDWFLITFAAVVLFVLARDLWGRRRGWIR</sequence>
<name>Y2876_MYCTO</name>
<keyword id="KW-1003">Cell membrane</keyword>
<keyword id="KW-0472">Membrane</keyword>
<keyword id="KW-1185">Reference proteome</keyword>
<keyword id="KW-0812">Transmembrane</keyword>
<keyword id="KW-1133">Transmembrane helix</keyword>
<accession>P9WL38</accession>
<accession>L0TDM5</accession>
<accession>Q10802</accession>
<evidence type="ECO:0000255" key="1"/>
<evidence type="ECO:0000305" key="2"/>
<comment type="subcellular location">
    <subcellularLocation>
        <location evidence="2">Cell membrane</location>
        <topology evidence="2">Multi-pass membrane protein</topology>
    </subcellularLocation>
</comment>
<comment type="similarity">
    <text evidence="2">To M.leprae ML1584.</text>
</comment>
<reference key="1">
    <citation type="journal article" date="2002" name="J. Bacteriol.">
        <title>Whole-genome comparison of Mycobacterium tuberculosis clinical and laboratory strains.</title>
        <authorList>
            <person name="Fleischmann R.D."/>
            <person name="Alland D."/>
            <person name="Eisen J.A."/>
            <person name="Carpenter L."/>
            <person name="White O."/>
            <person name="Peterson J.D."/>
            <person name="DeBoy R.T."/>
            <person name="Dodson R.J."/>
            <person name="Gwinn M.L."/>
            <person name="Haft D.H."/>
            <person name="Hickey E.K."/>
            <person name="Kolonay J.F."/>
            <person name="Nelson W.C."/>
            <person name="Umayam L.A."/>
            <person name="Ermolaeva M.D."/>
            <person name="Salzberg S.L."/>
            <person name="Delcher A."/>
            <person name="Utterback T.R."/>
            <person name="Weidman J.F."/>
            <person name="Khouri H.M."/>
            <person name="Gill J."/>
            <person name="Mikula A."/>
            <person name="Bishai W."/>
            <person name="Jacobs W.R. Jr."/>
            <person name="Venter J.C."/>
            <person name="Fraser C.M."/>
        </authorList>
    </citation>
    <scope>NUCLEOTIDE SEQUENCE [LARGE SCALE GENOMIC DNA]</scope>
    <source>
        <strain>CDC 1551 / Oshkosh</strain>
    </source>
</reference>
<protein>
    <recommendedName>
        <fullName>Uncharacterized protein MT2944.1</fullName>
    </recommendedName>
</protein>
<organism>
    <name type="scientific">Mycobacterium tuberculosis (strain CDC 1551 / Oshkosh)</name>
    <dbReference type="NCBI Taxonomy" id="83331"/>
    <lineage>
        <taxon>Bacteria</taxon>
        <taxon>Bacillati</taxon>
        <taxon>Actinomycetota</taxon>
        <taxon>Actinomycetes</taxon>
        <taxon>Mycobacteriales</taxon>
        <taxon>Mycobacteriaceae</taxon>
        <taxon>Mycobacterium</taxon>
        <taxon>Mycobacterium tuberculosis complex</taxon>
    </lineage>
</organism>
<feature type="chain" id="PRO_0000427546" description="Uncharacterized protein MT2944.1">
    <location>
        <begin position="1"/>
        <end position="104"/>
    </location>
</feature>
<feature type="transmembrane region" description="Helical" evidence="1">
    <location>
        <begin position="47"/>
        <end position="67"/>
    </location>
</feature>
<feature type="transmembrane region" description="Helical" evidence="1">
    <location>
        <begin position="72"/>
        <end position="92"/>
    </location>
</feature>
<proteinExistence type="predicted"/>